<feature type="chain" id="PRO_0000419990" description="E3 ubiquitin-protein ligase UHRF1">
    <location>
        <begin position="1"/>
        <end position="775"/>
    </location>
</feature>
<feature type="domain" description="Ubiquitin-like" evidence="4">
    <location>
        <begin position="1"/>
        <end position="77"/>
    </location>
</feature>
<feature type="domain" description="YDG" evidence="5">
    <location>
        <begin position="419"/>
        <end position="582"/>
    </location>
</feature>
<feature type="zinc finger region" description="PHD-type" evidence="2">
    <location>
        <begin position="299"/>
        <end position="366"/>
    </location>
</feature>
<feature type="zinc finger region" description="RING-type" evidence="3">
    <location>
        <begin position="706"/>
        <end position="745"/>
    </location>
</feature>
<feature type="region of interest" description="Disordered" evidence="6">
    <location>
        <begin position="81"/>
        <end position="128"/>
    </location>
</feature>
<feature type="region of interest" description="Tudor-like 1">
    <location>
        <begin position="131"/>
        <end position="207"/>
    </location>
</feature>
<feature type="region of interest" description="Tudor-like 2">
    <location>
        <begin position="214"/>
        <end position="283"/>
    </location>
</feature>
<feature type="region of interest" description="Linker" evidence="1">
    <location>
        <begin position="293"/>
        <end position="301"/>
    </location>
</feature>
<feature type="region of interest" description="Histone H3R2me0 binding" evidence="1">
    <location>
        <begin position="333"/>
        <end position="337"/>
    </location>
</feature>
<feature type="region of interest" description="Histone H3R2me0 binding" evidence="1">
    <location>
        <begin position="353"/>
        <end position="355"/>
    </location>
</feature>
<feature type="region of interest" description="Required to promote base flipping" evidence="1">
    <location>
        <begin position="445"/>
        <end position="446"/>
    </location>
</feature>
<feature type="region of interest" description="Required for formation of a 5-methylcytosine-binding pocket" evidence="1">
    <location>
        <begin position="466"/>
        <end position="469"/>
    </location>
</feature>
<feature type="region of interest" description="Required for formation of a 5-methylcytosine-binding pocket" evidence="1">
    <location>
        <begin position="478"/>
        <end position="481"/>
    </location>
</feature>
<feature type="region of interest" description="Disordered" evidence="6">
    <location>
        <begin position="616"/>
        <end position="655"/>
    </location>
</feature>
<feature type="compositionally biased region" description="Basic and acidic residues" evidence="6">
    <location>
        <begin position="616"/>
        <end position="628"/>
    </location>
</feature>
<feature type="binding site" evidence="1">
    <location>
        <begin position="463"/>
        <end position="464"/>
    </location>
    <ligand>
        <name>DNA</name>
        <dbReference type="ChEBI" id="CHEBI:16991"/>
    </ligand>
    <ligandPart>
        <name>5-methylcytosine group</name>
        <dbReference type="ChEBI" id="CHEBI:65274"/>
    </ligandPart>
</feature>
<feature type="binding site" evidence="1">
    <location>
        <position position="469"/>
    </location>
    <ligand>
        <name>DNA</name>
        <dbReference type="ChEBI" id="CHEBI:16991"/>
    </ligand>
    <ligandPart>
        <name>5-methylcytosine group</name>
        <dbReference type="ChEBI" id="CHEBI:65274"/>
    </ligandPart>
</feature>
<feature type="site" description="Histone H3K4me0 binding" evidence="1">
    <location>
        <position position="316"/>
    </location>
</feature>
<feature type="site" description="Histone H3R2me0 binding" evidence="1">
    <location>
        <position position="327"/>
    </location>
</feature>
<feature type="site" description="Histone H3R2me0 binding" evidence="1">
    <location>
        <position position="330"/>
    </location>
</feature>
<feature type="site" description="Required to confer preferential recognition of cytosine over thymine" evidence="1">
    <location>
        <position position="479"/>
    </location>
</feature>
<feature type="site" description="Required to discriminate between hemimethylated DNA versus symmetrically methylated DNA" evidence="1">
    <location>
        <position position="489"/>
    </location>
</feature>
<feature type="site" description="Required for affinity and specificity for 5-mCpG sequence" evidence="1">
    <location>
        <position position="491"/>
    </location>
</feature>
<gene>
    <name type="primary">uhrf1</name>
</gene>
<dbReference type="EC" id="2.3.2.27"/>
<dbReference type="EMBL" id="AAMC01100082">
    <property type="status" value="NOT_ANNOTATED_CDS"/>
    <property type="molecule type" value="Genomic_DNA"/>
</dbReference>
<dbReference type="EMBL" id="AAMC01100083">
    <property type="status" value="NOT_ANNOTATED_CDS"/>
    <property type="molecule type" value="Genomic_DNA"/>
</dbReference>
<dbReference type="EMBL" id="AAMC01100084">
    <property type="status" value="NOT_ANNOTATED_CDS"/>
    <property type="molecule type" value="Genomic_DNA"/>
</dbReference>
<dbReference type="EMBL" id="AAMC01100085">
    <property type="status" value="NOT_ANNOTATED_CDS"/>
    <property type="molecule type" value="Genomic_DNA"/>
</dbReference>
<dbReference type="EMBL" id="AAMC01100086">
    <property type="status" value="NOT_ANNOTATED_CDS"/>
    <property type="molecule type" value="Genomic_DNA"/>
</dbReference>
<dbReference type="EMBL" id="AAMC01100087">
    <property type="status" value="NOT_ANNOTATED_CDS"/>
    <property type="molecule type" value="Genomic_DNA"/>
</dbReference>
<dbReference type="SMR" id="F6UA42"/>
<dbReference type="FunCoup" id="F6UA42">
    <property type="interactions" value="1474"/>
</dbReference>
<dbReference type="STRING" id="8364.ENSXETP00000032247"/>
<dbReference type="PaxDb" id="8364-ENSXETP00000048273"/>
<dbReference type="eggNOG" id="ENOG502QRDQ">
    <property type="taxonomic scope" value="Eukaryota"/>
</dbReference>
<dbReference type="InParanoid" id="F6UA42"/>
<dbReference type="OrthoDB" id="2270193at2759"/>
<dbReference type="UniPathway" id="UPA00143"/>
<dbReference type="Proteomes" id="UP000008143">
    <property type="component" value="Unplaced"/>
</dbReference>
<dbReference type="GO" id="GO:0000785">
    <property type="term" value="C:chromatin"/>
    <property type="evidence" value="ECO:0000250"/>
    <property type="project" value="UniProtKB"/>
</dbReference>
<dbReference type="GO" id="GO:0000791">
    <property type="term" value="C:euchromatin"/>
    <property type="evidence" value="ECO:0000250"/>
    <property type="project" value="UniProtKB"/>
</dbReference>
<dbReference type="GO" id="GO:0000792">
    <property type="term" value="C:heterochromatin"/>
    <property type="evidence" value="ECO:0000250"/>
    <property type="project" value="UniProtKB"/>
</dbReference>
<dbReference type="GO" id="GO:0005634">
    <property type="term" value="C:nucleus"/>
    <property type="evidence" value="ECO:0007669"/>
    <property type="project" value="UniProtKB-SubCell"/>
</dbReference>
<dbReference type="GO" id="GO:0005657">
    <property type="term" value="C:replication fork"/>
    <property type="evidence" value="ECO:0000250"/>
    <property type="project" value="UniProtKB"/>
</dbReference>
<dbReference type="GO" id="GO:0044729">
    <property type="term" value="F:hemi-methylated DNA-binding"/>
    <property type="evidence" value="ECO:0000250"/>
    <property type="project" value="UniProtKB"/>
</dbReference>
<dbReference type="GO" id="GO:0042393">
    <property type="term" value="F:histone binding"/>
    <property type="evidence" value="ECO:0000250"/>
    <property type="project" value="UniProtKB"/>
</dbReference>
<dbReference type="GO" id="GO:0062072">
    <property type="term" value="F:histone H3K9me2/3 reader activity"/>
    <property type="evidence" value="ECO:0000250"/>
    <property type="project" value="UniProtKB"/>
</dbReference>
<dbReference type="GO" id="GO:0004842">
    <property type="term" value="F:ubiquitin-protein transferase activity"/>
    <property type="evidence" value="ECO:0000250"/>
    <property type="project" value="UniProtKB"/>
</dbReference>
<dbReference type="GO" id="GO:0008270">
    <property type="term" value="F:zinc ion binding"/>
    <property type="evidence" value="ECO:0000250"/>
    <property type="project" value="UniProtKB"/>
</dbReference>
<dbReference type="GO" id="GO:0031507">
    <property type="term" value="P:heterochromatin formation"/>
    <property type="evidence" value="ECO:0000250"/>
    <property type="project" value="UniProtKB"/>
</dbReference>
<dbReference type="GO" id="GO:0044027">
    <property type="term" value="P:negative regulation of gene expression via chromosomal CpG island methylation"/>
    <property type="evidence" value="ECO:0000250"/>
    <property type="project" value="UniProtKB"/>
</dbReference>
<dbReference type="GO" id="GO:0000122">
    <property type="term" value="P:negative regulation of transcription by RNA polymerase II"/>
    <property type="evidence" value="ECO:0000250"/>
    <property type="project" value="UniProtKB"/>
</dbReference>
<dbReference type="GO" id="GO:0016567">
    <property type="term" value="P:protein ubiquitination"/>
    <property type="evidence" value="ECO:0007669"/>
    <property type="project" value="UniProtKB-UniPathway"/>
</dbReference>
<dbReference type="GO" id="GO:0006511">
    <property type="term" value="P:ubiquitin-dependent protein catabolic process"/>
    <property type="evidence" value="ECO:0000250"/>
    <property type="project" value="UniProtKB"/>
</dbReference>
<dbReference type="CDD" id="cd15525">
    <property type="entry name" value="PHD_UHRF1_2"/>
    <property type="match status" value="1"/>
</dbReference>
<dbReference type="CDD" id="cd16769">
    <property type="entry name" value="RING-HC_UHRF1"/>
    <property type="match status" value="1"/>
</dbReference>
<dbReference type="CDD" id="cd20455">
    <property type="entry name" value="Tudor_UHRF1_rpt1"/>
    <property type="match status" value="1"/>
</dbReference>
<dbReference type="CDD" id="cd20457">
    <property type="entry name" value="Tudor_UHRF1_rpt2"/>
    <property type="match status" value="1"/>
</dbReference>
<dbReference type="CDD" id="cd17122">
    <property type="entry name" value="Ubl_UHRF1"/>
    <property type="match status" value="1"/>
</dbReference>
<dbReference type="FunFam" id="2.30.280.10:FF:000001">
    <property type="entry name" value="E3 ubiquitin-protein ligase UHRF1 isoform 1"/>
    <property type="match status" value="1"/>
</dbReference>
<dbReference type="FunFam" id="3.10.20.90:FF:000143">
    <property type="entry name" value="E3 ubiquitin-protein ligase UHRF1 isoform 1"/>
    <property type="match status" value="1"/>
</dbReference>
<dbReference type="FunFam" id="2.30.30.1150:FF:000001">
    <property type="entry name" value="E3 ubiquitin-protein ligase UHRF2 isoform X1"/>
    <property type="match status" value="1"/>
</dbReference>
<dbReference type="FunFam" id="3.30.40.10:FF:000066">
    <property type="entry name" value="E3 ubiquitin-protein ligase UHRF2 isoform X1"/>
    <property type="match status" value="1"/>
</dbReference>
<dbReference type="Gene3D" id="2.30.30.1150">
    <property type="match status" value="1"/>
</dbReference>
<dbReference type="Gene3D" id="2.30.30.140">
    <property type="match status" value="1"/>
</dbReference>
<dbReference type="Gene3D" id="3.10.20.90">
    <property type="entry name" value="Phosphatidylinositol 3-kinase Catalytic Subunit, Chain A, domain 1"/>
    <property type="match status" value="1"/>
</dbReference>
<dbReference type="Gene3D" id="2.30.280.10">
    <property type="entry name" value="SRA-YDG"/>
    <property type="match status" value="1"/>
</dbReference>
<dbReference type="Gene3D" id="3.30.40.10">
    <property type="entry name" value="Zinc/RING finger domain, C3HC4 (zinc finger)"/>
    <property type="match status" value="1"/>
</dbReference>
<dbReference type="InterPro" id="IPR015947">
    <property type="entry name" value="PUA-like_sf"/>
</dbReference>
<dbReference type="InterPro" id="IPR036987">
    <property type="entry name" value="SRA-YDG_sf"/>
</dbReference>
<dbReference type="InterPro" id="IPR003105">
    <property type="entry name" value="SRA_YDG"/>
</dbReference>
<dbReference type="InterPro" id="IPR021991">
    <property type="entry name" value="TTD_dom"/>
</dbReference>
<dbReference type="InterPro" id="IPR000626">
    <property type="entry name" value="Ubiquitin-like_dom"/>
</dbReference>
<dbReference type="InterPro" id="IPR029071">
    <property type="entry name" value="Ubiquitin-like_domsf"/>
</dbReference>
<dbReference type="InterPro" id="IPR047406">
    <property type="entry name" value="Ubl_UHRF1"/>
</dbReference>
<dbReference type="InterPro" id="IPR045134">
    <property type="entry name" value="UHRF1/2-like"/>
</dbReference>
<dbReference type="InterPro" id="IPR011011">
    <property type="entry name" value="Znf_FYVE_PHD"/>
</dbReference>
<dbReference type="InterPro" id="IPR001965">
    <property type="entry name" value="Znf_PHD"/>
</dbReference>
<dbReference type="InterPro" id="IPR019787">
    <property type="entry name" value="Znf_PHD-finger"/>
</dbReference>
<dbReference type="InterPro" id="IPR001841">
    <property type="entry name" value="Znf_RING"/>
</dbReference>
<dbReference type="InterPro" id="IPR013083">
    <property type="entry name" value="Znf_RING/FYVE/PHD"/>
</dbReference>
<dbReference type="InterPro" id="IPR017907">
    <property type="entry name" value="Znf_RING_CS"/>
</dbReference>
<dbReference type="PANTHER" id="PTHR14140">
    <property type="entry name" value="E3 UBIQUITIN-PROTEIN LIGASE UHRF-RELATED"/>
    <property type="match status" value="1"/>
</dbReference>
<dbReference type="PANTHER" id="PTHR14140:SF2">
    <property type="entry name" value="E3 UBIQUITIN-PROTEIN LIGASE UHRF1"/>
    <property type="match status" value="1"/>
</dbReference>
<dbReference type="Pfam" id="PF00628">
    <property type="entry name" value="PHD"/>
    <property type="match status" value="1"/>
</dbReference>
<dbReference type="Pfam" id="PF02182">
    <property type="entry name" value="SAD_SRA"/>
    <property type="match status" value="1"/>
</dbReference>
<dbReference type="Pfam" id="PF12148">
    <property type="entry name" value="TTD"/>
    <property type="match status" value="1"/>
</dbReference>
<dbReference type="Pfam" id="PF00240">
    <property type="entry name" value="ubiquitin"/>
    <property type="match status" value="1"/>
</dbReference>
<dbReference type="SMART" id="SM00249">
    <property type="entry name" value="PHD"/>
    <property type="match status" value="1"/>
</dbReference>
<dbReference type="SMART" id="SM00184">
    <property type="entry name" value="RING"/>
    <property type="match status" value="2"/>
</dbReference>
<dbReference type="SMART" id="SM00466">
    <property type="entry name" value="SRA"/>
    <property type="match status" value="1"/>
</dbReference>
<dbReference type="SMART" id="SM00213">
    <property type="entry name" value="UBQ"/>
    <property type="match status" value="1"/>
</dbReference>
<dbReference type="SUPFAM" id="SSF57903">
    <property type="entry name" value="FYVE/PHD zinc finger"/>
    <property type="match status" value="1"/>
</dbReference>
<dbReference type="SUPFAM" id="SSF88697">
    <property type="entry name" value="PUA domain-like"/>
    <property type="match status" value="1"/>
</dbReference>
<dbReference type="SUPFAM" id="SSF57850">
    <property type="entry name" value="RING/U-box"/>
    <property type="match status" value="1"/>
</dbReference>
<dbReference type="SUPFAM" id="SSF54236">
    <property type="entry name" value="Ubiquitin-like"/>
    <property type="match status" value="1"/>
</dbReference>
<dbReference type="PROSITE" id="PS50053">
    <property type="entry name" value="UBIQUITIN_2"/>
    <property type="match status" value="1"/>
</dbReference>
<dbReference type="PROSITE" id="PS51015">
    <property type="entry name" value="YDG"/>
    <property type="match status" value="1"/>
</dbReference>
<dbReference type="PROSITE" id="PS01359">
    <property type="entry name" value="ZF_PHD_1"/>
    <property type="match status" value="1"/>
</dbReference>
<dbReference type="PROSITE" id="PS50016">
    <property type="entry name" value="ZF_PHD_2"/>
    <property type="match status" value="1"/>
</dbReference>
<dbReference type="PROSITE" id="PS00518">
    <property type="entry name" value="ZF_RING_1"/>
    <property type="match status" value="1"/>
</dbReference>
<dbReference type="PROSITE" id="PS50089">
    <property type="entry name" value="ZF_RING_2"/>
    <property type="match status" value="2"/>
</dbReference>
<comment type="function">
    <text>Multidomain protein that acts as a key epigenetic regulator by bridging DNA methylation and chromatin modification. Specifically recognizes and binds hemimethylated DNA at replication forks via its YDG domain and recruits dnmt1 methyltransferase to ensure faithful propagation of the DNA methylation patterns through DNA replication. In addition to its role in maintenance of DNA methylation, also plays a key role in chromatin modification: through its tudor-like regions and PHD-type zinc fingers, specifically recognizes and binds histone H3 trimethylated at 'Lys-9' (H3K9me3) and unmethylated at 'Arg-2' (H3R2me0), respectively, and recruits chromatin proteins. Enriched in pericentric heterochromatin where it recruits different chromatin modifiers required for this chromatin replication. Also localizes to euchromatic regions where it negatively regulates transcription possibly by impacting DNA methylation and histone modifications. Has E3 ubiquitin-protein ligase activity by mediating the ubiquitination of target proteins. However, it is still unclear how E3 ubiquitin-protein ligase activity is related to its role in chromatin in vivo.</text>
</comment>
<comment type="catalytic activity">
    <reaction>
        <text>S-ubiquitinyl-[E2 ubiquitin-conjugating enzyme]-L-cysteine + [acceptor protein]-L-lysine = [E2 ubiquitin-conjugating enzyme]-L-cysteine + N(6)-ubiquitinyl-[acceptor protein]-L-lysine.</text>
        <dbReference type="EC" id="2.3.2.27"/>
    </reaction>
</comment>
<comment type="pathway">
    <text>Protein modification; protein ubiquitination.</text>
</comment>
<comment type="subcellular location">
    <subcellularLocation>
        <location evidence="5">Nucleus</location>
    </subcellularLocation>
    <text evidence="1">Localizes to replication foci. Enriched in pericentric heterochromatin. Also localizes to euchromatic regions (By similarity).</text>
</comment>
<comment type="domain">
    <text evidence="1">The tudor-like regions specifically recognize and bind histone H3 unmethylated at 'Arg-2' (H3R2me0), while the PHD-type zinc finger specifically recognizes and binds histone H3 trimethylated at 'Lys-9' (H3K9me3).</text>
</comment>
<comment type="domain">
    <text evidence="1">The YDG domain (also named SRA domain) specifically recognizes and binds hemimethylated DNA at replication forks (DNA that is only methylated on the mother strand of replicating DNA).</text>
</comment>
<comment type="domain">
    <text evidence="1">The RING finger is required for ubiquitin ligase activity.</text>
</comment>
<accession>F6UA42</accession>
<reference key="1">
    <citation type="journal article" date="2010" name="Science">
        <title>The genome of the Western clawed frog Xenopus tropicalis.</title>
        <authorList>
            <person name="Hellsten U."/>
            <person name="Harland R.M."/>
            <person name="Gilchrist M.J."/>
            <person name="Hendrix D."/>
            <person name="Jurka J."/>
            <person name="Kapitonov V."/>
            <person name="Ovcharenko I."/>
            <person name="Putnam N.H."/>
            <person name="Shu S."/>
            <person name="Taher L."/>
            <person name="Blitz I.L."/>
            <person name="Blumberg B."/>
            <person name="Dichmann D.S."/>
            <person name="Dubchak I."/>
            <person name="Amaya E."/>
            <person name="Detter J.C."/>
            <person name="Fletcher R."/>
            <person name="Gerhard D.S."/>
            <person name="Goodstein D."/>
            <person name="Graves T."/>
            <person name="Grigoriev I.V."/>
            <person name="Grimwood J."/>
            <person name="Kawashima T."/>
            <person name="Lindquist E."/>
            <person name="Lucas S.M."/>
            <person name="Mead P.E."/>
            <person name="Mitros T."/>
            <person name="Ogino H."/>
            <person name="Ohta Y."/>
            <person name="Poliakov A.V."/>
            <person name="Pollet N."/>
            <person name="Robert J."/>
            <person name="Salamov A."/>
            <person name="Sater A.K."/>
            <person name="Schmutz J."/>
            <person name="Terry A."/>
            <person name="Vize P.D."/>
            <person name="Warren W.C."/>
            <person name="Wells D."/>
            <person name="Wills A."/>
            <person name="Wilson R.K."/>
            <person name="Zimmerman L.B."/>
            <person name="Zorn A.M."/>
            <person name="Grainger R."/>
            <person name="Grammer T."/>
            <person name="Khokha M.K."/>
            <person name="Richardson P.M."/>
            <person name="Rokhsar D.S."/>
        </authorList>
    </citation>
    <scope>NUCLEOTIDE SEQUENCE [LARGE SCALE GENOMIC DNA]</scope>
</reference>
<keyword id="KW-0131">Cell cycle</keyword>
<keyword id="KW-0156">Chromatin regulator</keyword>
<keyword id="KW-0238">DNA-binding</keyword>
<keyword id="KW-0479">Metal-binding</keyword>
<keyword id="KW-0539">Nucleus</keyword>
<keyword id="KW-1185">Reference proteome</keyword>
<keyword id="KW-0677">Repeat</keyword>
<keyword id="KW-0678">Repressor</keyword>
<keyword id="KW-0804">Transcription</keyword>
<keyword id="KW-0805">Transcription regulation</keyword>
<keyword id="KW-0808">Transferase</keyword>
<keyword id="KW-0833">Ubl conjugation pathway</keyword>
<keyword id="KW-0862">Zinc</keyword>
<keyword id="KW-0863">Zinc-finger</keyword>
<evidence type="ECO:0000250" key="1"/>
<evidence type="ECO:0000255" key="2">
    <source>
        <dbReference type="PROSITE-ProRule" id="PRU00146"/>
    </source>
</evidence>
<evidence type="ECO:0000255" key="3">
    <source>
        <dbReference type="PROSITE-ProRule" id="PRU00175"/>
    </source>
</evidence>
<evidence type="ECO:0000255" key="4">
    <source>
        <dbReference type="PROSITE-ProRule" id="PRU00214"/>
    </source>
</evidence>
<evidence type="ECO:0000255" key="5">
    <source>
        <dbReference type="PROSITE-ProRule" id="PRU00358"/>
    </source>
</evidence>
<evidence type="ECO:0000256" key="6">
    <source>
        <dbReference type="SAM" id="MobiDB-lite"/>
    </source>
</evidence>
<sequence>MWIQVRTMDGRDTRRIDSLSKLTKVEDLRARIQQIFGVALESQRLFYRGKQMENGHTLFDYSVGLNDIVQLLVRQIPDSVPTKDKECGISDADSGCGSGQGESDKNSSCGEGATDVDGQPAGINSENVGPSLYKKNDLVDARDLNMGAWFEAQIVSVSKRVNPDGMSAEILDTSAASDDIIYHVKYEDYPENGVVQLTYKDVRLRARTTLPWHDLKVGQVVMVNYNPDEPKERGYWYDAEILRKRETRTIKEIYVKVLLGDAGDSLNDCRIRFVDEIYKIEEPGSAYITTESPQKRQNGPECKHCKDNPKRACRMCACYVCGGKQDPEKQLLCDECDMAFHIYCLKPPLSAIPQDEDWYCPDCRNDASEVVLAGEKLKESKKKAKMASASSSSQRDWGKGMACVGRSRECTIVPSNHYGPIPGVPVGTLWKFRVQVSESGVHRPHVAGIHGRSNDGSYSLVLAGGYEDDVDNGSEFTYTGSGGRDLSGNKRTAEQSCDQKLTNMNRALALNCSAPINDKEGAVAKDWRAGKPVRVVRNTKGKKHSKYAPEDGNRYDGIYKVVKYWPEKGKSGFLVWRYLLRRDDEEPAPWSKEGKERIKKLGLVMQYPDGYLESLASKEREKENKTEDELSESPSKGKRKRNSAGSGLSDAKSTPKKTKVESYKLSLDQKTLIKQDDLNAKLWREVMSFLKEGPKFLSKVEETFLCICCQEVVYEPITTECHHNICKGCLDRSFKALVHNCPACRHDLGKNYSLNVNKPLQAILSQLFPGYERGR</sequence>
<name>UHRF1_XENTR</name>
<organism>
    <name type="scientific">Xenopus tropicalis</name>
    <name type="common">Western clawed frog</name>
    <name type="synonym">Silurana tropicalis</name>
    <dbReference type="NCBI Taxonomy" id="8364"/>
    <lineage>
        <taxon>Eukaryota</taxon>
        <taxon>Metazoa</taxon>
        <taxon>Chordata</taxon>
        <taxon>Craniata</taxon>
        <taxon>Vertebrata</taxon>
        <taxon>Euteleostomi</taxon>
        <taxon>Amphibia</taxon>
        <taxon>Batrachia</taxon>
        <taxon>Anura</taxon>
        <taxon>Pipoidea</taxon>
        <taxon>Pipidae</taxon>
        <taxon>Xenopodinae</taxon>
        <taxon>Xenopus</taxon>
        <taxon>Silurana</taxon>
    </lineage>
</organism>
<protein>
    <recommendedName>
        <fullName>E3 ubiquitin-protein ligase UHRF1</fullName>
        <ecNumber>2.3.2.27</ecNumber>
    </recommendedName>
    <alternativeName>
        <fullName>RING-type E3 ubiquitin transferase UHRF1</fullName>
    </alternativeName>
    <alternativeName>
        <fullName>Ubiquitin-like PHD and RING finger domain-containing protein 1</fullName>
    </alternativeName>
    <alternativeName>
        <fullName>Ubiquitin-like-containing PHD and RING finger domains protein 1</fullName>
    </alternativeName>
</protein>
<proteinExistence type="inferred from homology"/>